<protein>
    <recommendedName>
        <fullName>Probable pyridoxal 5'-phosphate synthase subunit SNO2</fullName>
        <ecNumber>4.3.3.6</ecNumber>
    </recommendedName>
    <alternativeName>
        <fullName>PDX2 homolog 2</fullName>
        <shortName>Pdx2.2</shortName>
    </alternativeName>
    <alternativeName>
        <fullName>Pyridoxal 5'-phosphate synthase glutaminase subunit</fullName>
        <ecNumber>3.5.1.2</ecNumber>
    </alternativeName>
</protein>
<name>SNO2_YEAST</name>
<proteinExistence type="inferred from homology"/>
<organism>
    <name type="scientific">Saccharomyces cerevisiae (strain ATCC 204508 / S288c)</name>
    <name type="common">Baker's yeast</name>
    <dbReference type="NCBI Taxonomy" id="559292"/>
    <lineage>
        <taxon>Eukaryota</taxon>
        <taxon>Fungi</taxon>
        <taxon>Dikarya</taxon>
        <taxon>Ascomycota</taxon>
        <taxon>Saccharomycotina</taxon>
        <taxon>Saccharomycetes</taxon>
        <taxon>Saccharomycetales</taxon>
        <taxon>Saccharomycetaceae</taxon>
        <taxon>Saccharomyces</taxon>
    </lineage>
</organism>
<sequence length="222" mass="25208">MTVVIGVLALQGAFIEHVRHVEKCIVENRDFYEKKLSVMTVKDKNQLAQCDALIIPGGESTAMSLIAERTGFYDDLYAFVHNPSKVTWGTCAGMIYISQQLSNEEKLVKTLNLLKVKVKRNAFGRQAQSSTRICDFSNFIPHCNDFPATFIRAPVIEEVLDPEHVQVLYKLDGKDNGGQELIVAAKQKNNILATSFHPELAENDIRFHDWFIREFVLKNYSK</sequence>
<gene>
    <name type="primary">SNO2</name>
    <name type="ordered locus">YNL334C</name>
    <name type="ORF">N0285</name>
</gene>
<evidence type="ECO:0000250" key="1">
    <source>
        <dbReference type="UniProtKB" id="P37528"/>
    </source>
</evidence>
<evidence type="ECO:0000250" key="2">
    <source>
        <dbReference type="UniProtKB" id="Q03144"/>
    </source>
</evidence>
<evidence type="ECO:0000269" key="3">
    <source>
    </source>
</evidence>
<evidence type="ECO:0000305" key="4"/>
<reference key="1">
    <citation type="journal article" date="1997" name="Nature">
        <title>The nucleotide sequence of Saccharomyces cerevisiae chromosome XIV and its evolutionary implications.</title>
        <authorList>
            <person name="Philippsen P."/>
            <person name="Kleine K."/>
            <person name="Poehlmann R."/>
            <person name="Duesterhoeft A."/>
            <person name="Hamberg K."/>
            <person name="Hegemann J.H."/>
            <person name="Obermaier B."/>
            <person name="Urrestarazu L.A."/>
            <person name="Aert R."/>
            <person name="Albermann K."/>
            <person name="Altmann R."/>
            <person name="Andre B."/>
            <person name="Baladron V."/>
            <person name="Ballesta J.P.G."/>
            <person name="Becam A.-M."/>
            <person name="Beinhauer J.D."/>
            <person name="Boskovic J."/>
            <person name="Buitrago M.J."/>
            <person name="Bussereau F."/>
            <person name="Coster F."/>
            <person name="Crouzet M."/>
            <person name="D'Angelo M."/>
            <person name="Dal Pero F."/>
            <person name="De Antoni A."/>
            <person name="del Rey F."/>
            <person name="Doignon F."/>
            <person name="Domdey H."/>
            <person name="Dubois E."/>
            <person name="Fiedler T.A."/>
            <person name="Fleig U."/>
            <person name="Floeth M."/>
            <person name="Fritz C."/>
            <person name="Gaillardin C."/>
            <person name="Garcia-Cantalejo J.M."/>
            <person name="Glansdorff N."/>
            <person name="Goffeau A."/>
            <person name="Gueldener U."/>
            <person name="Herbert C.J."/>
            <person name="Heumann K."/>
            <person name="Heuss-Neitzel D."/>
            <person name="Hilbert H."/>
            <person name="Hinni K."/>
            <person name="Iraqui Houssaini I."/>
            <person name="Jacquet M."/>
            <person name="Jimenez A."/>
            <person name="Jonniaux J.-L."/>
            <person name="Karpfinger-Hartl L."/>
            <person name="Lanfranchi G."/>
            <person name="Lepingle A."/>
            <person name="Levesque H."/>
            <person name="Lyck R."/>
            <person name="Maftahi M."/>
            <person name="Mallet L."/>
            <person name="Maurer C.T.C."/>
            <person name="Messenguy F."/>
            <person name="Mewes H.-W."/>
            <person name="Moestl D."/>
            <person name="Nasr F."/>
            <person name="Nicaud J.-M."/>
            <person name="Niedenthal R.K."/>
            <person name="Pandolfo D."/>
            <person name="Pierard A."/>
            <person name="Piravandi E."/>
            <person name="Planta R.J."/>
            <person name="Pohl T.M."/>
            <person name="Purnelle B."/>
            <person name="Rebischung C."/>
            <person name="Remacha M.A."/>
            <person name="Revuelta J.L."/>
            <person name="Rinke M."/>
            <person name="Saiz J.E."/>
            <person name="Sartorello F."/>
            <person name="Scherens B."/>
            <person name="Sen-Gupta M."/>
            <person name="Soler-Mira A."/>
            <person name="Urbanus J.H.M."/>
            <person name="Valle G."/>
            <person name="Van Dyck L."/>
            <person name="Verhasselt P."/>
            <person name="Vierendeels F."/>
            <person name="Vissers S."/>
            <person name="Voet M."/>
            <person name="Volckaert G."/>
            <person name="Wach A."/>
            <person name="Wambutt R."/>
            <person name="Wedler H."/>
            <person name="Zollner A."/>
            <person name="Hani J."/>
        </authorList>
    </citation>
    <scope>NUCLEOTIDE SEQUENCE [LARGE SCALE GENOMIC DNA]</scope>
    <source>
        <strain>ATCC 204508 / S288c</strain>
    </source>
</reference>
<reference key="2">
    <citation type="journal article" date="2014" name="G3 (Bethesda)">
        <title>The reference genome sequence of Saccharomyces cerevisiae: Then and now.</title>
        <authorList>
            <person name="Engel S.R."/>
            <person name="Dietrich F.S."/>
            <person name="Fisk D.G."/>
            <person name="Binkley G."/>
            <person name="Balakrishnan R."/>
            <person name="Costanzo M.C."/>
            <person name="Dwight S.S."/>
            <person name="Hitz B.C."/>
            <person name="Karra K."/>
            <person name="Nash R.S."/>
            <person name="Weng S."/>
            <person name="Wong E.D."/>
            <person name="Lloyd P."/>
            <person name="Skrzypek M.S."/>
            <person name="Miyasato S.R."/>
            <person name="Simison M."/>
            <person name="Cherry J.M."/>
        </authorList>
    </citation>
    <scope>GENOME REANNOTATION</scope>
    <source>
        <strain>ATCC 204508 / S288c</strain>
    </source>
</reference>
<reference key="3">
    <citation type="journal article" date="2002" name="Yeast">
        <title>Functional analysis of yeast gene families involved in metabolism of vitamins B1 and B6.</title>
        <authorList>
            <person name="Rodriguez-Navarro S."/>
            <person name="Llorente B."/>
            <person name="Rodriguez-Manzaneque M.T."/>
            <person name="Ramne A."/>
            <person name="Uber G."/>
            <person name="Marchesan D."/>
            <person name="Dujon B."/>
            <person name="Herrero E."/>
            <person name="Sunnerhagen P."/>
            <person name="Perez-Ortin J.E."/>
        </authorList>
    </citation>
    <scope>FUNCTION</scope>
</reference>
<keyword id="KW-0315">Glutamine amidotransferase</keyword>
<keyword id="KW-0378">Hydrolase</keyword>
<keyword id="KW-0456">Lyase</keyword>
<keyword id="KW-0663">Pyridoxal phosphate</keyword>
<keyword id="KW-1185">Reference proteome</keyword>
<feature type="chain" id="PRO_0000135620" description="Probable pyridoxal 5'-phosphate synthase subunit SNO2">
    <location>
        <begin position="1"/>
        <end position="222"/>
    </location>
</feature>
<feature type="active site" description="Nucleophile" evidence="1">
    <location>
        <position position="91"/>
    </location>
</feature>
<feature type="active site" description="Charge relay system" evidence="1">
    <location>
        <position position="197"/>
    </location>
</feature>
<feature type="active site" description="Charge relay system" evidence="1">
    <location>
        <position position="199"/>
    </location>
</feature>
<feature type="binding site" evidence="1">
    <location>
        <begin position="58"/>
        <end position="60"/>
    </location>
    <ligand>
        <name>L-glutamine</name>
        <dbReference type="ChEBI" id="CHEBI:58359"/>
    </ligand>
</feature>
<feature type="binding site" evidence="1">
    <location>
        <position position="120"/>
    </location>
    <ligand>
        <name>L-glutamine</name>
        <dbReference type="ChEBI" id="CHEBI:58359"/>
    </ligand>
</feature>
<feature type="binding site" evidence="1">
    <location>
        <begin position="151"/>
        <end position="152"/>
    </location>
    <ligand>
        <name>L-glutamine</name>
        <dbReference type="ChEBI" id="CHEBI:58359"/>
    </ligand>
</feature>
<comment type="function">
    <text evidence="2 3">Catalyzes the hydrolysis of glutamine to glutamate and ammonia as part of the biosynthesis of pyridoxal 5'-phosphate. The resulting ammonia molecule is channeled to the active site of a SNZ isoform.</text>
</comment>
<comment type="catalytic activity">
    <reaction evidence="2">
        <text>aldehydo-D-ribose 5-phosphate + D-glyceraldehyde 3-phosphate + L-glutamine = pyridoxal 5'-phosphate + L-glutamate + phosphate + 3 H2O + H(+)</text>
        <dbReference type="Rhea" id="RHEA:31507"/>
        <dbReference type="ChEBI" id="CHEBI:15377"/>
        <dbReference type="ChEBI" id="CHEBI:15378"/>
        <dbReference type="ChEBI" id="CHEBI:29985"/>
        <dbReference type="ChEBI" id="CHEBI:43474"/>
        <dbReference type="ChEBI" id="CHEBI:58273"/>
        <dbReference type="ChEBI" id="CHEBI:58359"/>
        <dbReference type="ChEBI" id="CHEBI:59776"/>
        <dbReference type="ChEBI" id="CHEBI:597326"/>
        <dbReference type="EC" id="4.3.3.6"/>
    </reaction>
</comment>
<comment type="catalytic activity">
    <reaction evidence="2">
        <text>L-glutamine + H2O = L-glutamate + NH4(+)</text>
        <dbReference type="Rhea" id="RHEA:15889"/>
        <dbReference type="ChEBI" id="CHEBI:15377"/>
        <dbReference type="ChEBI" id="CHEBI:28938"/>
        <dbReference type="ChEBI" id="CHEBI:29985"/>
        <dbReference type="ChEBI" id="CHEBI:58359"/>
        <dbReference type="EC" id="3.5.1.2"/>
    </reaction>
</comment>
<comment type="pathway">
    <text evidence="2">Cofactor biosynthesis; pyridoxal 5'-phosphate biosynthesis.</text>
</comment>
<comment type="similarity">
    <text evidence="4">Belongs to the glutaminase PdxT/SNO family.</text>
</comment>
<dbReference type="EC" id="4.3.3.6"/>
<dbReference type="EC" id="3.5.1.2"/>
<dbReference type="EMBL" id="Z71610">
    <property type="protein sequence ID" value="CAA96268.1"/>
    <property type="molecule type" value="Genomic_DNA"/>
</dbReference>
<dbReference type="EMBL" id="BK006947">
    <property type="protein sequence ID" value="DAA10229.1"/>
    <property type="molecule type" value="Genomic_DNA"/>
</dbReference>
<dbReference type="PIR" id="S63320">
    <property type="entry name" value="S63320"/>
</dbReference>
<dbReference type="RefSeq" id="NP_014065.1">
    <property type="nucleotide sequence ID" value="NM_001183172.1"/>
</dbReference>
<dbReference type="SMR" id="P53823"/>
<dbReference type="BioGRID" id="35507">
    <property type="interactions" value="64"/>
</dbReference>
<dbReference type="ComplexPortal" id="CPX-1371">
    <property type="entry name" value="SNO2-SNZ1 pyridoxal 5'-phosphate synthase complex"/>
</dbReference>
<dbReference type="DIP" id="DIP-2069N"/>
<dbReference type="FunCoup" id="P53823">
    <property type="interactions" value="251"/>
</dbReference>
<dbReference type="IntAct" id="P53823">
    <property type="interactions" value="7"/>
</dbReference>
<dbReference type="STRING" id="4932.YNL334C"/>
<dbReference type="MEROPS" id="C26.A32"/>
<dbReference type="PaxDb" id="4932-YNL334C"/>
<dbReference type="PeptideAtlas" id="P53823"/>
<dbReference type="EnsemblFungi" id="YNL334C_mRNA">
    <property type="protein sequence ID" value="YNL334C"/>
    <property type="gene ID" value="YNL334C"/>
</dbReference>
<dbReference type="GeneID" id="855382"/>
<dbReference type="KEGG" id="sce:YNL334C"/>
<dbReference type="AGR" id="SGD:S000005278"/>
<dbReference type="SGD" id="S000005278">
    <property type="gene designation" value="SNO2"/>
</dbReference>
<dbReference type="VEuPathDB" id="FungiDB:YNL334C"/>
<dbReference type="eggNOG" id="KOG3210">
    <property type="taxonomic scope" value="Eukaryota"/>
</dbReference>
<dbReference type="GeneTree" id="ENSGT00390000011516"/>
<dbReference type="HOGENOM" id="CLU_069674_0_1_1"/>
<dbReference type="InParanoid" id="P53823"/>
<dbReference type="OMA" id="RWHQYFV"/>
<dbReference type="OrthoDB" id="2039at2759"/>
<dbReference type="BioCyc" id="YEAST:G3O-33317-MONOMER"/>
<dbReference type="UniPathway" id="UPA00245"/>
<dbReference type="PRO" id="PR:P53823"/>
<dbReference type="Proteomes" id="UP000002311">
    <property type="component" value="Chromosome XIV"/>
</dbReference>
<dbReference type="RNAct" id="P53823">
    <property type="molecule type" value="protein"/>
</dbReference>
<dbReference type="GO" id="GO:0005829">
    <property type="term" value="C:cytosol"/>
    <property type="evidence" value="ECO:0000318"/>
    <property type="project" value="GO_Central"/>
</dbReference>
<dbReference type="GO" id="GO:1903600">
    <property type="term" value="C:glutaminase complex"/>
    <property type="evidence" value="ECO:0000250"/>
    <property type="project" value="ComplexPortal"/>
</dbReference>
<dbReference type="GO" id="GO:0004359">
    <property type="term" value="F:glutaminase activity"/>
    <property type="evidence" value="ECO:0007669"/>
    <property type="project" value="UniProtKB-EC"/>
</dbReference>
<dbReference type="GO" id="GO:0036381">
    <property type="term" value="F:pyridoxal 5'-phosphate synthase (glutamine hydrolysing) activity"/>
    <property type="evidence" value="ECO:0007669"/>
    <property type="project" value="UniProtKB-EC"/>
</dbReference>
<dbReference type="GO" id="GO:0006543">
    <property type="term" value="P:glutamine catabolic process"/>
    <property type="evidence" value="ECO:0000250"/>
    <property type="project" value="ComplexPortal"/>
</dbReference>
<dbReference type="GO" id="GO:0042823">
    <property type="term" value="P:pyridoxal phosphate biosynthetic process"/>
    <property type="evidence" value="ECO:0000250"/>
    <property type="project" value="ComplexPortal"/>
</dbReference>
<dbReference type="GO" id="GO:0008614">
    <property type="term" value="P:pyridoxine metabolic process"/>
    <property type="evidence" value="ECO:0000318"/>
    <property type="project" value="GO_Central"/>
</dbReference>
<dbReference type="CDD" id="cd01749">
    <property type="entry name" value="GATase1_PB"/>
    <property type="match status" value="1"/>
</dbReference>
<dbReference type="FunFam" id="3.40.50.880:FF:000042">
    <property type="entry name" value="Pyridoxine 2"/>
    <property type="match status" value="1"/>
</dbReference>
<dbReference type="Gene3D" id="3.40.50.880">
    <property type="match status" value="1"/>
</dbReference>
<dbReference type="InterPro" id="IPR029062">
    <property type="entry name" value="Class_I_gatase-like"/>
</dbReference>
<dbReference type="InterPro" id="IPR002161">
    <property type="entry name" value="PdxT/SNO"/>
</dbReference>
<dbReference type="InterPro" id="IPR021196">
    <property type="entry name" value="PdxT/SNO_CS"/>
</dbReference>
<dbReference type="NCBIfam" id="TIGR03800">
    <property type="entry name" value="PLP_synth_Pdx2"/>
    <property type="match status" value="1"/>
</dbReference>
<dbReference type="PANTHER" id="PTHR31559">
    <property type="entry name" value="PYRIDOXAL 5'-PHOSPHATE SYNTHASE SUBUNIT SNO"/>
    <property type="match status" value="1"/>
</dbReference>
<dbReference type="PANTHER" id="PTHR31559:SF0">
    <property type="entry name" value="PYRIDOXAL 5'-PHOSPHATE SYNTHASE SUBUNIT SNO1-RELATED"/>
    <property type="match status" value="1"/>
</dbReference>
<dbReference type="Pfam" id="PF01174">
    <property type="entry name" value="SNO"/>
    <property type="match status" value="1"/>
</dbReference>
<dbReference type="PIRSF" id="PIRSF005639">
    <property type="entry name" value="Glut_amidoT_SNO"/>
    <property type="match status" value="1"/>
</dbReference>
<dbReference type="SUPFAM" id="SSF52317">
    <property type="entry name" value="Class I glutamine amidotransferase-like"/>
    <property type="match status" value="1"/>
</dbReference>
<dbReference type="PROSITE" id="PS01236">
    <property type="entry name" value="PDXT_SNO_1"/>
    <property type="match status" value="1"/>
</dbReference>
<dbReference type="PROSITE" id="PS51130">
    <property type="entry name" value="PDXT_SNO_2"/>
    <property type="match status" value="1"/>
</dbReference>
<accession>P53823</accession>
<accession>D6W0L3</accession>